<comment type="similarity">
    <text evidence="1">Belongs to the bacterial ribosomal protein bL28 family.</text>
</comment>
<gene>
    <name evidence="1" type="primary">rpmB</name>
    <name type="ordered locus">BF2510</name>
</gene>
<dbReference type="EMBL" id="CR626927">
    <property type="protein sequence ID" value="CAH08210.1"/>
    <property type="molecule type" value="Genomic_DNA"/>
</dbReference>
<dbReference type="RefSeq" id="WP_005787937.1">
    <property type="nucleotide sequence ID" value="NZ_UFTH01000001.1"/>
</dbReference>
<dbReference type="SMR" id="Q5LCF5"/>
<dbReference type="PaxDb" id="272559-BF9343_2429"/>
<dbReference type="GeneID" id="60369535"/>
<dbReference type="KEGG" id="bfs:BF9343_2429"/>
<dbReference type="eggNOG" id="COG0227">
    <property type="taxonomic scope" value="Bacteria"/>
</dbReference>
<dbReference type="HOGENOM" id="CLU_064548_3_1_10"/>
<dbReference type="Proteomes" id="UP000006731">
    <property type="component" value="Chromosome"/>
</dbReference>
<dbReference type="GO" id="GO:1990904">
    <property type="term" value="C:ribonucleoprotein complex"/>
    <property type="evidence" value="ECO:0007669"/>
    <property type="project" value="UniProtKB-KW"/>
</dbReference>
<dbReference type="GO" id="GO:0005840">
    <property type="term" value="C:ribosome"/>
    <property type="evidence" value="ECO:0007669"/>
    <property type="project" value="UniProtKB-KW"/>
</dbReference>
<dbReference type="GO" id="GO:0003735">
    <property type="term" value="F:structural constituent of ribosome"/>
    <property type="evidence" value="ECO:0007669"/>
    <property type="project" value="InterPro"/>
</dbReference>
<dbReference type="GO" id="GO:0006412">
    <property type="term" value="P:translation"/>
    <property type="evidence" value="ECO:0007669"/>
    <property type="project" value="UniProtKB-UniRule"/>
</dbReference>
<dbReference type="FunFam" id="2.30.170.40:FF:000004">
    <property type="entry name" value="50S ribosomal protein L28"/>
    <property type="match status" value="1"/>
</dbReference>
<dbReference type="Gene3D" id="2.30.170.40">
    <property type="entry name" value="Ribosomal protein L28/L24"/>
    <property type="match status" value="1"/>
</dbReference>
<dbReference type="HAMAP" id="MF_00373">
    <property type="entry name" value="Ribosomal_bL28"/>
    <property type="match status" value="1"/>
</dbReference>
<dbReference type="InterPro" id="IPR026569">
    <property type="entry name" value="Ribosomal_bL28"/>
</dbReference>
<dbReference type="InterPro" id="IPR034704">
    <property type="entry name" value="Ribosomal_bL28/bL31-like_sf"/>
</dbReference>
<dbReference type="InterPro" id="IPR001383">
    <property type="entry name" value="Ribosomal_bL28_bact-type"/>
</dbReference>
<dbReference type="InterPro" id="IPR037147">
    <property type="entry name" value="Ribosomal_bL28_sf"/>
</dbReference>
<dbReference type="NCBIfam" id="TIGR00009">
    <property type="entry name" value="L28"/>
    <property type="match status" value="1"/>
</dbReference>
<dbReference type="PANTHER" id="PTHR13528">
    <property type="entry name" value="39S RIBOSOMAL PROTEIN L28, MITOCHONDRIAL"/>
    <property type="match status" value="1"/>
</dbReference>
<dbReference type="PANTHER" id="PTHR13528:SF2">
    <property type="entry name" value="LARGE RIBOSOMAL SUBUNIT PROTEIN BL28M"/>
    <property type="match status" value="1"/>
</dbReference>
<dbReference type="Pfam" id="PF00830">
    <property type="entry name" value="Ribosomal_L28"/>
    <property type="match status" value="1"/>
</dbReference>
<dbReference type="SUPFAM" id="SSF143800">
    <property type="entry name" value="L28p-like"/>
    <property type="match status" value="1"/>
</dbReference>
<organism>
    <name type="scientific">Bacteroides fragilis (strain ATCC 25285 / DSM 2151 / CCUG 4856 / JCM 11019 / LMG 10263 / NCTC 9343 / Onslow / VPI 2553 / EN-2)</name>
    <dbReference type="NCBI Taxonomy" id="272559"/>
    <lineage>
        <taxon>Bacteria</taxon>
        <taxon>Pseudomonadati</taxon>
        <taxon>Bacteroidota</taxon>
        <taxon>Bacteroidia</taxon>
        <taxon>Bacteroidales</taxon>
        <taxon>Bacteroidaceae</taxon>
        <taxon>Bacteroides</taxon>
    </lineage>
</organism>
<accession>Q5LCF5</accession>
<sequence length="86" mass="9701">MSKICQITGKKAMIGNNVSHSKRRTKRTFDLNLFNKKFYYVEQDCWISLSLCAAGLRIINKKGLDAALNDAVAKGYCDWKTIKVVG</sequence>
<name>RL28_BACFN</name>
<feature type="chain" id="PRO_1000007172" description="Large ribosomal subunit protein bL28">
    <location>
        <begin position="1"/>
        <end position="86"/>
    </location>
</feature>
<keyword id="KW-0687">Ribonucleoprotein</keyword>
<keyword id="KW-0689">Ribosomal protein</keyword>
<protein>
    <recommendedName>
        <fullName evidence="1">Large ribosomal subunit protein bL28</fullName>
    </recommendedName>
    <alternativeName>
        <fullName evidence="2">50S ribosomal protein L28</fullName>
    </alternativeName>
</protein>
<reference key="1">
    <citation type="journal article" date="2005" name="Science">
        <title>Extensive DNA inversions in the B. fragilis genome control variable gene expression.</title>
        <authorList>
            <person name="Cerdeno-Tarraga A.-M."/>
            <person name="Patrick S."/>
            <person name="Crossman L.C."/>
            <person name="Blakely G."/>
            <person name="Abratt V."/>
            <person name="Lennard N."/>
            <person name="Poxton I."/>
            <person name="Duerden B."/>
            <person name="Harris B."/>
            <person name="Quail M.A."/>
            <person name="Barron A."/>
            <person name="Clark L."/>
            <person name="Corton C."/>
            <person name="Doggett J."/>
            <person name="Holden M.T.G."/>
            <person name="Larke N."/>
            <person name="Line A."/>
            <person name="Lord A."/>
            <person name="Norbertczak H."/>
            <person name="Ormond D."/>
            <person name="Price C."/>
            <person name="Rabbinowitsch E."/>
            <person name="Woodward J."/>
            <person name="Barrell B.G."/>
            <person name="Parkhill J."/>
        </authorList>
    </citation>
    <scope>NUCLEOTIDE SEQUENCE [LARGE SCALE GENOMIC DNA]</scope>
    <source>
        <strain>ATCC 25285 / DSM 2151 / CCUG 4856 / JCM 11019 / LMG 10263 / NCTC 9343 / Onslow / VPI 2553 / EN-2</strain>
    </source>
</reference>
<proteinExistence type="inferred from homology"/>
<evidence type="ECO:0000255" key="1">
    <source>
        <dbReference type="HAMAP-Rule" id="MF_00373"/>
    </source>
</evidence>
<evidence type="ECO:0000305" key="2"/>